<accession>Q88AZ4</accession>
<dbReference type="EC" id="4.1.1.49" evidence="1"/>
<dbReference type="EMBL" id="AE016853">
    <property type="protein sequence ID" value="AAO53785.1"/>
    <property type="molecule type" value="Genomic_DNA"/>
</dbReference>
<dbReference type="RefSeq" id="NP_790090.1">
    <property type="nucleotide sequence ID" value="NC_004578.1"/>
</dbReference>
<dbReference type="RefSeq" id="WP_005613653.1">
    <property type="nucleotide sequence ID" value="NC_004578.1"/>
</dbReference>
<dbReference type="SMR" id="Q88AZ4"/>
<dbReference type="STRING" id="223283.PSPTO_0239"/>
<dbReference type="GeneID" id="1181847"/>
<dbReference type="KEGG" id="pst:PSPTO_0239"/>
<dbReference type="PATRIC" id="fig|223283.9.peg.250"/>
<dbReference type="eggNOG" id="COG1866">
    <property type="taxonomic scope" value="Bacteria"/>
</dbReference>
<dbReference type="HOGENOM" id="CLU_018247_0_1_6"/>
<dbReference type="OrthoDB" id="9806325at2"/>
<dbReference type="PhylomeDB" id="Q88AZ4"/>
<dbReference type="UniPathway" id="UPA00138"/>
<dbReference type="Proteomes" id="UP000002515">
    <property type="component" value="Chromosome"/>
</dbReference>
<dbReference type="GO" id="GO:0005829">
    <property type="term" value="C:cytosol"/>
    <property type="evidence" value="ECO:0007669"/>
    <property type="project" value="TreeGrafter"/>
</dbReference>
<dbReference type="GO" id="GO:0005524">
    <property type="term" value="F:ATP binding"/>
    <property type="evidence" value="ECO:0007669"/>
    <property type="project" value="UniProtKB-UniRule"/>
</dbReference>
<dbReference type="GO" id="GO:0046872">
    <property type="term" value="F:metal ion binding"/>
    <property type="evidence" value="ECO:0007669"/>
    <property type="project" value="UniProtKB-KW"/>
</dbReference>
<dbReference type="GO" id="GO:0004612">
    <property type="term" value="F:phosphoenolpyruvate carboxykinase (ATP) activity"/>
    <property type="evidence" value="ECO:0007669"/>
    <property type="project" value="UniProtKB-UniRule"/>
</dbReference>
<dbReference type="GO" id="GO:0006094">
    <property type="term" value="P:gluconeogenesis"/>
    <property type="evidence" value="ECO:0007669"/>
    <property type="project" value="UniProtKB-UniRule"/>
</dbReference>
<dbReference type="Gene3D" id="3.90.228.20">
    <property type="match status" value="1"/>
</dbReference>
<dbReference type="Gene3D" id="3.40.449.10">
    <property type="entry name" value="Phosphoenolpyruvate Carboxykinase, domain 1"/>
    <property type="match status" value="1"/>
</dbReference>
<dbReference type="Gene3D" id="2.170.8.10">
    <property type="entry name" value="Phosphoenolpyruvate Carboxykinase, domain 2"/>
    <property type="match status" value="1"/>
</dbReference>
<dbReference type="HAMAP" id="MF_00453">
    <property type="entry name" value="PEPCK_ATP"/>
    <property type="match status" value="1"/>
</dbReference>
<dbReference type="InterPro" id="IPR001272">
    <property type="entry name" value="PEP_carboxykinase_ATP"/>
</dbReference>
<dbReference type="InterPro" id="IPR013035">
    <property type="entry name" value="PEP_carboxykinase_C"/>
</dbReference>
<dbReference type="InterPro" id="IPR008210">
    <property type="entry name" value="PEP_carboxykinase_N"/>
</dbReference>
<dbReference type="InterPro" id="IPR015994">
    <property type="entry name" value="PEPCK_ATP_CS"/>
</dbReference>
<dbReference type="NCBIfam" id="TIGR00224">
    <property type="entry name" value="pckA"/>
    <property type="match status" value="1"/>
</dbReference>
<dbReference type="NCBIfam" id="NF006820">
    <property type="entry name" value="PRK09344.1-2"/>
    <property type="match status" value="1"/>
</dbReference>
<dbReference type="NCBIfam" id="NF006821">
    <property type="entry name" value="PRK09344.1-3"/>
    <property type="match status" value="1"/>
</dbReference>
<dbReference type="NCBIfam" id="NF006823">
    <property type="entry name" value="PRK09344.1-5"/>
    <property type="match status" value="1"/>
</dbReference>
<dbReference type="PANTHER" id="PTHR30031:SF0">
    <property type="entry name" value="PHOSPHOENOLPYRUVATE CARBOXYKINASE (ATP)"/>
    <property type="match status" value="1"/>
</dbReference>
<dbReference type="PANTHER" id="PTHR30031">
    <property type="entry name" value="PHOSPHOENOLPYRUVATE CARBOXYKINASE ATP"/>
    <property type="match status" value="1"/>
</dbReference>
<dbReference type="Pfam" id="PF01293">
    <property type="entry name" value="PEPCK_ATP"/>
    <property type="match status" value="1"/>
</dbReference>
<dbReference type="PIRSF" id="PIRSF006294">
    <property type="entry name" value="PEP_crbxkin"/>
    <property type="match status" value="1"/>
</dbReference>
<dbReference type="SUPFAM" id="SSF68923">
    <property type="entry name" value="PEP carboxykinase N-terminal domain"/>
    <property type="match status" value="1"/>
</dbReference>
<dbReference type="SUPFAM" id="SSF53795">
    <property type="entry name" value="PEP carboxykinase-like"/>
    <property type="match status" value="1"/>
</dbReference>
<dbReference type="PROSITE" id="PS00532">
    <property type="entry name" value="PEPCK_ATP"/>
    <property type="match status" value="1"/>
</dbReference>
<gene>
    <name evidence="1" type="primary">pckA</name>
    <name type="ordered locus">PSPTO_0239</name>
</gene>
<evidence type="ECO:0000255" key="1">
    <source>
        <dbReference type="HAMAP-Rule" id="MF_00453"/>
    </source>
</evidence>
<organism>
    <name type="scientific">Pseudomonas syringae pv. tomato (strain ATCC BAA-871 / DC3000)</name>
    <dbReference type="NCBI Taxonomy" id="223283"/>
    <lineage>
        <taxon>Bacteria</taxon>
        <taxon>Pseudomonadati</taxon>
        <taxon>Pseudomonadota</taxon>
        <taxon>Gammaproteobacteria</taxon>
        <taxon>Pseudomonadales</taxon>
        <taxon>Pseudomonadaceae</taxon>
        <taxon>Pseudomonas</taxon>
    </lineage>
</organism>
<comment type="function">
    <text evidence="1">Involved in the gluconeogenesis. Catalyzes the conversion of oxaloacetate (OAA) to phosphoenolpyruvate (PEP) through direct phosphoryl transfer between the nucleoside triphosphate and OAA.</text>
</comment>
<comment type="catalytic activity">
    <reaction evidence="1">
        <text>oxaloacetate + ATP = phosphoenolpyruvate + ADP + CO2</text>
        <dbReference type="Rhea" id="RHEA:18617"/>
        <dbReference type="ChEBI" id="CHEBI:16452"/>
        <dbReference type="ChEBI" id="CHEBI:16526"/>
        <dbReference type="ChEBI" id="CHEBI:30616"/>
        <dbReference type="ChEBI" id="CHEBI:58702"/>
        <dbReference type="ChEBI" id="CHEBI:456216"/>
        <dbReference type="EC" id="4.1.1.49"/>
    </reaction>
</comment>
<comment type="cofactor">
    <cofactor evidence="1">
        <name>Mn(2+)</name>
        <dbReference type="ChEBI" id="CHEBI:29035"/>
    </cofactor>
    <text evidence="1">Binds 1 Mn(2+) ion per subunit.</text>
</comment>
<comment type="pathway">
    <text evidence="1">Carbohydrate biosynthesis; gluconeogenesis.</text>
</comment>
<comment type="subunit">
    <text evidence="1">Monomer.</text>
</comment>
<comment type="subcellular location">
    <subcellularLocation>
        <location evidence="1">Cytoplasm</location>
    </subcellularLocation>
</comment>
<comment type="similarity">
    <text evidence="1">Belongs to the phosphoenolpyruvate carboxykinase (ATP) family.</text>
</comment>
<proteinExistence type="inferred from homology"/>
<feature type="chain" id="PRO_0000203834" description="Phosphoenolpyruvate carboxykinase (ATP)">
    <location>
        <begin position="1"/>
        <end position="514"/>
    </location>
</feature>
<feature type="binding site" evidence="1">
    <location>
        <position position="45"/>
    </location>
    <ligand>
        <name>substrate</name>
    </ligand>
</feature>
<feature type="binding site" evidence="1">
    <location>
        <position position="179"/>
    </location>
    <ligand>
        <name>substrate</name>
    </ligand>
</feature>
<feature type="binding site" evidence="1">
    <location>
        <position position="185"/>
    </location>
    <ligand>
        <name>ATP</name>
        <dbReference type="ChEBI" id="CHEBI:30616"/>
    </ligand>
</feature>
<feature type="binding site" evidence="1">
    <location>
        <position position="185"/>
    </location>
    <ligand>
        <name>Mn(2+)</name>
        <dbReference type="ChEBI" id="CHEBI:29035"/>
    </ligand>
</feature>
<feature type="binding site" evidence="1">
    <location>
        <position position="185"/>
    </location>
    <ligand>
        <name>substrate</name>
    </ligand>
</feature>
<feature type="binding site" evidence="1">
    <location>
        <position position="204"/>
    </location>
    <ligand>
        <name>ATP</name>
        <dbReference type="ChEBI" id="CHEBI:30616"/>
    </ligand>
</feature>
<feature type="binding site" evidence="1">
    <location>
        <position position="204"/>
    </location>
    <ligand>
        <name>Mn(2+)</name>
        <dbReference type="ChEBI" id="CHEBI:29035"/>
    </ligand>
</feature>
<feature type="binding site" evidence="1">
    <location>
        <begin position="220"/>
        <end position="228"/>
    </location>
    <ligand>
        <name>ATP</name>
        <dbReference type="ChEBI" id="CHEBI:30616"/>
    </ligand>
</feature>
<feature type="binding site" evidence="1">
    <location>
        <position position="241"/>
    </location>
    <ligand>
        <name>Mn(2+)</name>
        <dbReference type="ChEBI" id="CHEBI:29035"/>
    </ligand>
</feature>
<feature type="binding site" evidence="1">
    <location>
        <position position="269"/>
    </location>
    <ligand>
        <name>ATP</name>
        <dbReference type="ChEBI" id="CHEBI:30616"/>
    </ligand>
</feature>
<feature type="binding site" evidence="1">
    <location>
        <position position="306"/>
    </location>
    <ligand>
        <name>ATP</name>
        <dbReference type="ChEBI" id="CHEBI:30616"/>
    </ligand>
</feature>
<feature type="binding site" evidence="1">
    <location>
        <position position="306"/>
    </location>
    <ligand>
        <name>substrate</name>
    </ligand>
</feature>
<feature type="binding site" evidence="1">
    <location>
        <position position="432"/>
    </location>
    <ligand>
        <name>ATP</name>
        <dbReference type="ChEBI" id="CHEBI:30616"/>
    </ligand>
</feature>
<keyword id="KW-0067">ATP-binding</keyword>
<keyword id="KW-0963">Cytoplasm</keyword>
<keyword id="KW-0210">Decarboxylase</keyword>
<keyword id="KW-0312">Gluconeogenesis</keyword>
<keyword id="KW-0456">Lyase</keyword>
<keyword id="KW-0464">Manganese</keyword>
<keyword id="KW-0479">Metal-binding</keyword>
<keyword id="KW-0547">Nucleotide-binding</keyword>
<keyword id="KW-1185">Reference proteome</keyword>
<reference key="1">
    <citation type="journal article" date="2003" name="Proc. Natl. Acad. Sci. U.S.A.">
        <title>The complete genome sequence of the Arabidopsis and tomato pathogen Pseudomonas syringae pv. tomato DC3000.</title>
        <authorList>
            <person name="Buell C.R."/>
            <person name="Joardar V."/>
            <person name="Lindeberg M."/>
            <person name="Selengut J."/>
            <person name="Paulsen I.T."/>
            <person name="Gwinn M.L."/>
            <person name="Dodson R.J."/>
            <person name="DeBoy R.T."/>
            <person name="Durkin A.S."/>
            <person name="Kolonay J.F."/>
            <person name="Madupu R."/>
            <person name="Daugherty S.C."/>
            <person name="Brinkac L.M."/>
            <person name="Beanan M.J."/>
            <person name="Haft D.H."/>
            <person name="Nelson W.C."/>
            <person name="Davidsen T.M."/>
            <person name="Zafar N."/>
            <person name="Zhou L."/>
            <person name="Liu J."/>
            <person name="Yuan Q."/>
            <person name="Khouri H.M."/>
            <person name="Fedorova N.B."/>
            <person name="Tran B."/>
            <person name="Russell D."/>
            <person name="Berry K.J."/>
            <person name="Utterback T.R."/>
            <person name="Van Aken S.E."/>
            <person name="Feldblyum T.V."/>
            <person name="D'Ascenzo M."/>
            <person name="Deng W.-L."/>
            <person name="Ramos A.R."/>
            <person name="Alfano J.R."/>
            <person name="Cartinhour S."/>
            <person name="Chatterjee A.K."/>
            <person name="Delaney T.P."/>
            <person name="Lazarowitz S.G."/>
            <person name="Martin G.B."/>
            <person name="Schneider D.J."/>
            <person name="Tang X."/>
            <person name="Bender C.L."/>
            <person name="White O."/>
            <person name="Fraser C.M."/>
            <person name="Collmer A."/>
        </authorList>
    </citation>
    <scope>NUCLEOTIDE SEQUENCE [LARGE SCALE GENOMIC DNA]</scope>
    <source>
        <strain>ATCC BAA-871 / DC3000</strain>
    </source>
</reference>
<sequence length="514" mass="55809">MTQINNAVHTDLSTDELVKEALARNEGVLSDTGALVVETGHRTGRSPVDRFIVEEPSTQDAIAWGPINRKFPAEKFDALWNRVGAYLAERERFVSHVHVGSDPAHYLPVKMTTETAWHNLFGRCLFINPEQYNPAGKDEWEIQNAPWFVCDPERDGTNSDGTVIINFAARKVLIAGMRYAGEMKKAMFSVQNFLLPAVDVLPMHCAANMGEEGDVTLFFGLSGTGKTTLSADESRYLIGDDEHGWGVGVVFNIEGGCYAKCIDLSEKNEPVIWKAIQHGAVLENVVLDPVTKTADYADSSLTQNSRAAYPRELIEKRAPKNLGGEPNAVIFLTCDLTGVLPPVSILSEEQAAYHFLSGYTALVGSTEMGSGSGIKSTFSTCFGAPFFPRPAGEYAELLIKRIRGFKSKVYLVNTGWTGGGYGVGKRFNIPTTRGVIAAIQSGALIGAETEHLDTINLDVPKLVPGVDTGLLNPRNTWADKAAYDEAAKALAGLFVENFKKFDVSDAIKAAGPKL</sequence>
<name>PCKA_PSESM</name>
<protein>
    <recommendedName>
        <fullName evidence="1">Phosphoenolpyruvate carboxykinase (ATP)</fullName>
        <shortName evidence="1">PCK</shortName>
        <shortName evidence="1">PEP carboxykinase</shortName>
        <shortName evidence="1">PEPCK</shortName>
        <ecNumber evidence="1">4.1.1.49</ecNumber>
    </recommendedName>
</protein>